<accession>P33924</accession>
<accession>P76450</accession>
<accession>Q2MAQ2</accession>
<accession>Q47291</accession>
<keyword id="KW-0998">Cell outer membrane</keyword>
<keyword id="KW-0472">Membrane</keyword>
<keyword id="KW-1185">Reference proteome</keyword>
<keyword id="KW-0732">Signal</keyword>
<keyword id="KW-0812">Transmembrane</keyword>
<keyword id="KW-1134">Transmembrane beta strand</keyword>
<sequence length="863" mass="91202">MHQSGSVSLCRSAISVLVATALYSPIALASTVEYGETVDGVVLEKDIQLVYGTANNTKINPGGEQHIKEFGVSNNTEINGGYQYIEMNGAAEYSVLNDGYQIVQMGGAANQTTLNNGVLQVYGAANDTTIKGGRLIVEKDGGAVFVAIEKGGLLEVKEGGFAFAVDQKAGGAIKTTTRAMEVFGTNRLGQFDIKNGIANNMLLENGGSLRVEENDFAYNTTVDSGGLLEVMDGGTVTGVDKKAGGKLIVSTNALEVSGPNSKGQFSIKDGVSKNYELDDGSGLIVMEDTQAIDTILDKHATMQSLGKDTGTKVQANAVYDLGRSYQNGSITYSSKAISENMVINNGRANVWAGTMVNVSVRGNDGILEVMKPQINYAPAMLVGKVVVSEGASFRTHGAVDTSKADVSLENSVWTIIADITTTNQNTLLNLANLAMSDANVIMMDEPVTRSSVTASAENFITLTTNTLSGNGNFYMRTDMANHQSDQLNVTGQATGDFKIFVTDTGASPAAGDSLTLVTTGGGDAAFTLGNAGGVVDIGTYEYTLLDNGNHSWSLAENRAQITPSTTDVLNMAAAQPLVFDAELDTVRERLGSVKGVSYDTAMWSSAINTRNNVTTDAGAGFEQTLTGLTLGIDSRFSREESSTIRGLIFGYSHSDIGFDRGGKGNIDSYTLGAYAGWEHQNGAYVDGVVKVDRFANTIHGKMSNGATAFGDYNSNGAGAHVESGFRWVDGLWSVRPYLAFTGFTTDGQDYTLSNGMRADVGNTRILRAEAGTAVSYHMDLQNGTTLEPWLKAAVRQEYADSNQVKVNDDGKFNNDVAGTSGVYQAGIRSSFTPTLSGHLSVSYGNGAGVESPWNTQAGVVWTF</sequence>
<gene>
    <name type="primary">yejO</name>
    <name type="ordered locus">b2190</name>
    <name type="ordered locus">JW5839</name>
</gene>
<proteinExistence type="uncertain"/>
<comment type="subcellular location">
    <subcellularLocation>
        <location evidence="3">Cell outer membrane</location>
        <topology evidence="3">Peripheral membrane protein</topology>
    </subcellularLocation>
</comment>
<comment type="caution">
    <text evidence="3">Could be the product of a pseudogene. The original sequence is interrupted between codons 21 and 22 by a IS5K insertion element.</text>
</comment>
<name>YEJO_ECOLI</name>
<organism>
    <name type="scientific">Escherichia coli (strain K12)</name>
    <dbReference type="NCBI Taxonomy" id="83333"/>
    <lineage>
        <taxon>Bacteria</taxon>
        <taxon>Pseudomonadati</taxon>
        <taxon>Pseudomonadota</taxon>
        <taxon>Gammaproteobacteria</taxon>
        <taxon>Enterobacterales</taxon>
        <taxon>Enterobacteriaceae</taxon>
        <taxon>Escherichia</taxon>
    </lineage>
</organism>
<dbReference type="EMBL" id="U00008">
    <property type="protein sequence ID" value="AAA16385.1"/>
    <property type="status" value="ALT_SEQ"/>
    <property type="molecule type" value="Genomic_DNA"/>
</dbReference>
<dbReference type="EMBL" id="U00096">
    <property type="status" value="NOT_ANNOTATED_CDS"/>
    <property type="molecule type" value="Genomic_DNA"/>
</dbReference>
<dbReference type="EMBL" id="AP009048">
    <property type="protein sequence ID" value="BAE76654.1"/>
    <property type="status" value="ALT_SEQ"/>
    <property type="molecule type" value="Genomic_DNA"/>
</dbReference>
<dbReference type="PIR" id="D64988">
    <property type="entry name" value="D64988"/>
</dbReference>
<dbReference type="SMR" id="P33924"/>
<dbReference type="BioGRID" id="4260480">
    <property type="interactions" value="444"/>
</dbReference>
<dbReference type="DIP" id="DIP-11942N"/>
<dbReference type="FunCoup" id="P33924">
    <property type="interactions" value="150"/>
</dbReference>
<dbReference type="IntAct" id="P33924">
    <property type="interactions" value="1"/>
</dbReference>
<dbReference type="TCDB" id="1.B.12.8.4">
    <property type="family name" value="the autotransporter-1 (at-1) family"/>
</dbReference>
<dbReference type="KEGG" id="ecj:JW5839"/>
<dbReference type="EchoBASE" id="EB1982"/>
<dbReference type="eggNOG" id="COG3468">
    <property type="taxonomic scope" value="Bacteria"/>
</dbReference>
<dbReference type="HOGENOM" id="CLU_002318_0_0_6"/>
<dbReference type="InParanoid" id="P33924"/>
<dbReference type="PhylomeDB" id="P33924"/>
<dbReference type="Proteomes" id="UP000000625">
    <property type="component" value="Chromosome"/>
</dbReference>
<dbReference type="GO" id="GO:0009279">
    <property type="term" value="C:cell outer membrane"/>
    <property type="evidence" value="ECO:0007669"/>
    <property type="project" value="UniProtKB-SubCell"/>
</dbReference>
<dbReference type="CDD" id="cd01343">
    <property type="entry name" value="PL1_Passenger_AT"/>
    <property type="match status" value="1"/>
</dbReference>
<dbReference type="Gene3D" id="2.160.20.20">
    <property type="match status" value="2"/>
</dbReference>
<dbReference type="Gene3D" id="2.40.128.130">
    <property type="entry name" value="Autotransporter beta-domain"/>
    <property type="match status" value="1"/>
</dbReference>
<dbReference type="InterPro" id="IPR030930">
    <property type="entry name" value="AIDA"/>
</dbReference>
<dbReference type="InterPro" id="IPR005546">
    <property type="entry name" value="Autotransporte_beta"/>
</dbReference>
<dbReference type="InterPro" id="IPR036709">
    <property type="entry name" value="Autotransporte_beta_dom_sf"/>
</dbReference>
<dbReference type="InterPro" id="IPR051551">
    <property type="entry name" value="Autotransporter_adhesion"/>
</dbReference>
<dbReference type="InterPro" id="IPR012332">
    <property type="entry name" value="Autotransporter_pectin_lyase_C"/>
</dbReference>
<dbReference type="InterPro" id="IPR006315">
    <property type="entry name" value="OM_autotransptr_brl_dom"/>
</dbReference>
<dbReference type="InterPro" id="IPR011050">
    <property type="entry name" value="Pectin_lyase_fold/virulence"/>
</dbReference>
<dbReference type="InterPro" id="IPR004899">
    <property type="entry name" value="Pertactin_central"/>
</dbReference>
<dbReference type="InterPro" id="IPR003991">
    <property type="entry name" value="Pertactin_virulence_factor"/>
</dbReference>
<dbReference type="NCBIfam" id="TIGR01414">
    <property type="entry name" value="autotrans_barl"/>
    <property type="match status" value="1"/>
</dbReference>
<dbReference type="NCBIfam" id="TIGR04415">
    <property type="entry name" value="O_hepto_targRPT"/>
    <property type="match status" value="3"/>
</dbReference>
<dbReference type="PANTHER" id="PTHR35037:SF7">
    <property type="entry name" value="AUTOTRANSPORTER"/>
    <property type="match status" value="1"/>
</dbReference>
<dbReference type="PANTHER" id="PTHR35037">
    <property type="entry name" value="C-TERMINAL REGION OF AIDA-LIKE PROTEIN"/>
    <property type="match status" value="1"/>
</dbReference>
<dbReference type="Pfam" id="PF16168">
    <property type="entry name" value="AIDA"/>
    <property type="match status" value="2"/>
</dbReference>
<dbReference type="Pfam" id="PF03797">
    <property type="entry name" value="Autotransporter"/>
    <property type="match status" value="1"/>
</dbReference>
<dbReference type="Pfam" id="PF03212">
    <property type="entry name" value="Pertactin"/>
    <property type="match status" value="1"/>
</dbReference>
<dbReference type="PRINTS" id="PR01484">
    <property type="entry name" value="PRTACTNFAMLY"/>
</dbReference>
<dbReference type="SMART" id="SM00869">
    <property type="entry name" value="Autotransporter"/>
    <property type="match status" value="1"/>
</dbReference>
<dbReference type="SUPFAM" id="SSF103515">
    <property type="entry name" value="Autotransporter"/>
    <property type="match status" value="1"/>
</dbReference>
<dbReference type="SUPFAM" id="SSF51126">
    <property type="entry name" value="Pectin lyase-like"/>
    <property type="match status" value="1"/>
</dbReference>
<dbReference type="PROSITE" id="PS51208">
    <property type="entry name" value="AUTOTRANSPORTER"/>
    <property type="match status" value="1"/>
</dbReference>
<evidence type="ECO:0000255" key="1"/>
<evidence type="ECO:0000255" key="2">
    <source>
        <dbReference type="PROSITE-ProRule" id="PRU00556"/>
    </source>
</evidence>
<evidence type="ECO:0000305" key="3"/>
<protein>
    <recommendedName>
        <fullName>Putative uncharacterized outer membrane protein YejO</fullName>
    </recommendedName>
</protein>
<reference key="1">
    <citation type="submission" date="1993-10" db="EMBL/GenBank/DDBJ databases">
        <title>Automated multiplex sequencing of the E.coli genome.</title>
        <authorList>
            <person name="Richterich P."/>
            <person name="Lakey N."/>
            <person name="Gryan G."/>
            <person name="Jaehn L."/>
            <person name="Mintz L."/>
            <person name="Robison K."/>
            <person name="Church G.M."/>
        </authorList>
    </citation>
    <scope>NUCLEOTIDE SEQUENCE [LARGE SCALE GENOMIC DNA]</scope>
    <source>
        <strain>K12 / BHB2600</strain>
    </source>
</reference>
<reference key="2">
    <citation type="journal article" date="1997" name="Science">
        <title>The complete genome sequence of Escherichia coli K-12.</title>
        <authorList>
            <person name="Blattner F.R."/>
            <person name="Plunkett G. III"/>
            <person name="Bloch C.A."/>
            <person name="Perna N.T."/>
            <person name="Burland V."/>
            <person name="Riley M."/>
            <person name="Collado-Vides J."/>
            <person name="Glasner J.D."/>
            <person name="Rode C.K."/>
            <person name="Mayhew G.F."/>
            <person name="Gregor J."/>
            <person name="Davis N.W."/>
            <person name="Kirkpatrick H.A."/>
            <person name="Goeden M.A."/>
            <person name="Rose D.J."/>
            <person name="Mau B."/>
            <person name="Shao Y."/>
        </authorList>
    </citation>
    <scope>NUCLEOTIDE SEQUENCE [LARGE SCALE GENOMIC DNA]</scope>
    <source>
        <strain>K12 / MG1655 / ATCC 47076</strain>
    </source>
</reference>
<reference key="3">
    <citation type="journal article" date="2006" name="Mol. Syst. Biol.">
        <title>Highly accurate genome sequences of Escherichia coli K-12 strains MG1655 and W3110.</title>
        <authorList>
            <person name="Hayashi K."/>
            <person name="Morooka N."/>
            <person name="Yamamoto Y."/>
            <person name="Fujita K."/>
            <person name="Isono K."/>
            <person name="Choi S."/>
            <person name="Ohtsubo E."/>
            <person name="Baba T."/>
            <person name="Wanner B.L."/>
            <person name="Mori H."/>
            <person name="Horiuchi T."/>
        </authorList>
    </citation>
    <scope>NUCLEOTIDE SEQUENCE [LARGE SCALE GENOMIC DNA]</scope>
    <source>
        <strain>K12 / W3110 / ATCC 27325 / DSM 5911</strain>
    </source>
</reference>
<reference key="4">
    <citation type="unpublished observations" date="1994-01">
        <authorList>
            <person name="Rudd K.E."/>
        </authorList>
    </citation>
    <scope>PRESENCE OF AN INSERTION SEQUENCE</scope>
</reference>
<feature type="signal peptide" evidence="1">
    <location>
        <begin position="1"/>
        <end position="29"/>
    </location>
</feature>
<feature type="chain" id="PRO_0000204732" description="Putative uncharacterized outer membrane protein YejO">
    <location>
        <begin position="30"/>
        <end position="863"/>
    </location>
</feature>
<feature type="domain" description="Autotransporter" evidence="2">
    <location>
        <begin position="595"/>
        <end position="863"/>
    </location>
</feature>